<organism>
    <name type="scientific">Homo sapiens</name>
    <name type="common">Human</name>
    <dbReference type="NCBI Taxonomy" id="9606"/>
    <lineage>
        <taxon>Eukaryota</taxon>
        <taxon>Metazoa</taxon>
        <taxon>Chordata</taxon>
        <taxon>Craniata</taxon>
        <taxon>Vertebrata</taxon>
        <taxon>Euteleostomi</taxon>
        <taxon>Mammalia</taxon>
        <taxon>Eutheria</taxon>
        <taxon>Euarchontoglires</taxon>
        <taxon>Primates</taxon>
        <taxon>Haplorrhini</taxon>
        <taxon>Catarrhini</taxon>
        <taxon>Hominidae</taxon>
        <taxon>Homo</taxon>
    </lineage>
</organism>
<evidence type="ECO:0000255" key="1"/>
<evidence type="ECO:0000256" key="2">
    <source>
        <dbReference type="SAM" id="MobiDB-lite"/>
    </source>
</evidence>
<evidence type="ECO:0000305" key="3"/>
<proteinExistence type="uncertain"/>
<dbReference type="EMBL" id="AL353804">
    <property type="status" value="NOT_ANNOTATED_CDS"/>
    <property type="molecule type" value="Genomic_DNA"/>
</dbReference>
<dbReference type="SMR" id="P58550"/>
<dbReference type="BioMuta" id="HGNC:31124"/>
<dbReference type="AGR" id="HGNC:31124"/>
<dbReference type="GeneCards" id="FXYD6P3"/>
<dbReference type="HGNC" id="HGNC:31124">
    <property type="gene designation" value="FXYD6P3"/>
</dbReference>
<dbReference type="neXtProt" id="NX_P58550"/>
<dbReference type="InParanoid" id="P58550"/>
<dbReference type="PAN-GO" id="P58550">
    <property type="GO annotations" value="2 GO annotations based on evolutionary models"/>
</dbReference>
<dbReference type="PhylomeDB" id="P58550"/>
<dbReference type="Pharos" id="P58550">
    <property type="development level" value="Tdark"/>
</dbReference>
<dbReference type="Proteomes" id="UP000005640">
    <property type="component" value="Unplaced"/>
</dbReference>
<dbReference type="RNAct" id="P58550">
    <property type="molecule type" value="protein"/>
</dbReference>
<dbReference type="GO" id="GO:0016020">
    <property type="term" value="C:membrane"/>
    <property type="evidence" value="ECO:0007669"/>
    <property type="project" value="UniProtKB-SubCell"/>
</dbReference>
<dbReference type="GO" id="GO:0017080">
    <property type="term" value="F:sodium channel regulator activity"/>
    <property type="evidence" value="ECO:0000318"/>
    <property type="project" value="GO_Central"/>
</dbReference>
<dbReference type="GO" id="GO:0034220">
    <property type="term" value="P:monoatomic ion transmembrane transport"/>
    <property type="evidence" value="ECO:0007669"/>
    <property type="project" value="UniProtKB-KW"/>
</dbReference>
<dbReference type="GO" id="GO:1903278">
    <property type="term" value="P:positive regulation of sodium ion export across plasma membrane"/>
    <property type="evidence" value="ECO:0000318"/>
    <property type="project" value="GO_Central"/>
</dbReference>
<dbReference type="FunFam" id="1.20.5.780:FF:000001">
    <property type="entry name" value="Fxyd domain-containing ion transport regulator"/>
    <property type="match status" value="1"/>
</dbReference>
<dbReference type="Gene3D" id="1.20.5.780">
    <property type="entry name" value="Single helix bin"/>
    <property type="match status" value="1"/>
</dbReference>
<dbReference type="InterPro" id="IPR047297">
    <property type="entry name" value="FXYD_motif"/>
</dbReference>
<dbReference type="InterPro" id="IPR000272">
    <property type="entry name" value="Ion-transport_regulator_FXYD"/>
</dbReference>
<dbReference type="PANTHER" id="PTHR14132:SF15">
    <property type="entry name" value="FXYD DOMAIN-CONTAINING ION TRANSPORT REGULATOR 6-RELATED"/>
    <property type="match status" value="1"/>
</dbReference>
<dbReference type="PANTHER" id="PTHR14132">
    <property type="entry name" value="SODIUM/POTASSIUM-TRANSPORTING ATPASE SUBUNIT GAMMA"/>
    <property type="match status" value="1"/>
</dbReference>
<dbReference type="Pfam" id="PF02038">
    <property type="entry name" value="ATP1G1_PLM_MAT8"/>
    <property type="match status" value="1"/>
</dbReference>
<dbReference type="PROSITE" id="PS01310">
    <property type="entry name" value="FXYD"/>
    <property type="match status" value="1"/>
</dbReference>
<feature type="signal peptide" evidence="1">
    <location>
        <begin position="1"/>
        <end position="18"/>
    </location>
</feature>
<feature type="chain" id="PRO_0000010377" description="Putative FXYD domain-containing ion transport regulator 8">
    <location>
        <begin position="19"/>
        <end position="94"/>
    </location>
</feature>
<feature type="topological domain" description="Extracellular" evidence="1">
    <location>
        <begin position="19"/>
        <end position="34"/>
    </location>
</feature>
<feature type="transmembrane region" description="Helical" evidence="1">
    <location>
        <begin position="35"/>
        <end position="58"/>
    </location>
</feature>
<feature type="topological domain" description="Cytoplasmic" evidence="1">
    <location>
        <begin position="59"/>
        <end position="94"/>
    </location>
</feature>
<feature type="region of interest" description="Disordered" evidence="2">
    <location>
        <begin position="66"/>
        <end position="94"/>
    </location>
</feature>
<protein>
    <recommendedName>
        <fullName>Putative FXYD domain-containing ion transport regulator 8</fullName>
    </recommendedName>
</protein>
<name>FXYD8_HUMAN</name>
<keyword id="KW-0407">Ion channel</keyword>
<keyword id="KW-0406">Ion transport</keyword>
<keyword id="KW-0472">Membrane</keyword>
<keyword id="KW-1185">Reference proteome</keyword>
<keyword id="KW-0732">Signal</keyword>
<keyword id="KW-0812">Transmembrane</keyword>
<keyword id="KW-1133">Transmembrane helix</keyword>
<keyword id="KW-0813">Transport</keyword>
<comment type="subcellular location">
    <subcellularLocation>
        <location evidence="3">Membrane</location>
        <topology evidence="3">Single-pass type I membrane protein</topology>
    </subcellularLocation>
</comment>
<comment type="similarity">
    <text evidence="3">Belongs to the FXYD family.</text>
</comment>
<comment type="caution">
    <text evidence="3">Could be the product of a pseudogene.</text>
</comment>
<reference key="1">
    <citation type="journal article" date="2005" name="Nature">
        <title>The DNA sequence of the human X chromosome.</title>
        <authorList>
            <person name="Ross M.T."/>
            <person name="Grafham D.V."/>
            <person name="Coffey A.J."/>
            <person name="Scherer S."/>
            <person name="McLay K."/>
            <person name="Muzny D."/>
            <person name="Platzer M."/>
            <person name="Howell G.R."/>
            <person name="Burrows C."/>
            <person name="Bird C.P."/>
            <person name="Frankish A."/>
            <person name="Lovell F.L."/>
            <person name="Howe K.L."/>
            <person name="Ashurst J.L."/>
            <person name="Fulton R.S."/>
            <person name="Sudbrak R."/>
            <person name="Wen G."/>
            <person name="Jones M.C."/>
            <person name="Hurles M.E."/>
            <person name="Andrews T.D."/>
            <person name="Scott C.E."/>
            <person name="Searle S."/>
            <person name="Ramser J."/>
            <person name="Whittaker A."/>
            <person name="Deadman R."/>
            <person name="Carter N.P."/>
            <person name="Hunt S.E."/>
            <person name="Chen R."/>
            <person name="Cree A."/>
            <person name="Gunaratne P."/>
            <person name="Havlak P."/>
            <person name="Hodgson A."/>
            <person name="Metzker M.L."/>
            <person name="Richards S."/>
            <person name="Scott G."/>
            <person name="Steffen D."/>
            <person name="Sodergren E."/>
            <person name="Wheeler D.A."/>
            <person name="Worley K.C."/>
            <person name="Ainscough R."/>
            <person name="Ambrose K.D."/>
            <person name="Ansari-Lari M.A."/>
            <person name="Aradhya S."/>
            <person name="Ashwell R.I."/>
            <person name="Babbage A.K."/>
            <person name="Bagguley C.L."/>
            <person name="Ballabio A."/>
            <person name="Banerjee R."/>
            <person name="Barker G.E."/>
            <person name="Barlow K.F."/>
            <person name="Barrett I.P."/>
            <person name="Bates K.N."/>
            <person name="Beare D.M."/>
            <person name="Beasley H."/>
            <person name="Beasley O."/>
            <person name="Beck A."/>
            <person name="Bethel G."/>
            <person name="Blechschmidt K."/>
            <person name="Brady N."/>
            <person name="Bray-Allen S."/>
            <person name="Bridgeman A.M."/>
            <person name="Brown A.J."/>
            <person name="Brown M.J."/>
            <person name="Bonnin D."/>
            <person name="Bruford E.A."/>
            <person name="Buhay C."/>
            <person name="Burch P."/>
            <person name="Burford D."/>
            <person name="Burgess J."/>
            <person name="Burrill W."/>
            <person name="Burton J."/>
            <person name="Bye J.M."/>
            <person name="Carder C."/>
            <person name="Carrel L."/>
            <person name="Chako J."/>
            <person name="Chapman J.C."/>
            <person name="Chavez D."/>
            <person name="Chen E."/>
            <person name="Chen G."/>
            <person name="Chen Y."/>
            <person name="Chen Z."/>
            <person name="Chinault C."/>
            <person name="Ciccodicola A."/>
            <person name="Clark S.Y."/>
            <person name="Clarke G."/>
            <person name="Clee C.M."/>
            <person name="Clegg S."/>
            <person name="Clerc-Blankenburg K."/>
            <person name="Clifford K."/>
            <person name="Cobley V."/>
            <person name="Cole C.G."/>
            <person name="Conquer J.S."/>
            <person name="Corby N."/>
            <person name="Connor R.E."/>
            <person name="David R."/>
            <person name="Davies J."/>
            <person name="Davis C."/>
            <person name="Davis J."/>
            <person name="Delgado O."/>
            <person name="Deshazo D."/>
            <person name="Dhami P."/>
            <person name="Ding Y."/>
            <person name="Dinh H."/>
            <person name="Dodsworth S."/>
            <person name="Draper H."/>
            <person name="Dugan-Rocha S."/>
            <person name="Dunham A."/>
            <person name="Dunn M."/>
            <person name="Durbin K.J."/>
            <person name="Dutta I."/>
            <person name="Eades T."/>
            <person name="Ellwood M."/>
            <person name="Emery-Cohen A."/>
            <person name="Errington H."/>
            <person name="Evans K.L."/>
            <person name="Faulkner L."/>
            <person name="Francis F."/>
            <person name="Frankland J."/>
            <person name="Fraser A.E."/>
            <person name="Galgoczy P."/>
            <person name="Gilbert J."/>
            <person name="Gill R."/>
            <person name="Gloeckner G."/>
            <person name="Gregory S.G."/>
            <person name="Gribble S."/>
            <person name="Griffiths C."/>
            <person name="Grocock R."/>
            <person name="Gu Y."/>
            <person name="Gwilliam R."/>
            <person name="Hamilton C."/>
            <person name="Hart E.A."/>
            <person name="Hawes A."/>
            <person name="Heath P.D."/>
            <person name="Heitmann K."/>
            <person name="Hennig S."/>
            <person name="Hernandez J."/>
            <person name="Hinzmann B."/>
            <person name="Ho S."/>
            <person name="Hoffs M."/>
            <person name="Howden P.J."/>
            <person name="Huckle E.J."/>
            <person name="Hume J."/>
            <person name="Hunt P.J."/>
            <person name="Hunt A.R."/>
            <person name="Isherwood J."/>
            <person name="Jacob L."/>
            <person name="Johnson D."/>
            <person name="Jones S."/>
            <person name="de Jong P.J."/>
            <person name="Joseph S.S."/>
            <person name="Keenan S."/>
            <person name="Kelly S."/>
            <person name="Kershaw J.K."/>
            <person name="Khan Z."/>
            <person name="Kioschis P."/>
            <person name="Klages S."/>
            <person name="Knights A.J."/>
            <person name="Kosiura A."/>
            <person name="Kovar-Smith C."/>
            <person name="Laird G.K."/>
            <person name="Langford C."/>
            <person name="Lawlor S."/>
            <person name="Leversha M."/>
            <person name="Lewis L."/>
            <person name="Liu W."/>
            <person name="Lloyd C."/>
            <person name="Lloyd D.M."/>
            <person name="Loulseged H."/>
            <person name="Loveland J.E."/>
            <person name="Lovell J.D."/>
            <person name="Lozado R."/>
            <person name="Lu J."/>
            <person name="Lyne R."/>
            <person name="Ma J."/>
            <person name="Maheshwari M."/>
            <person name="Matthews L.H."/>
            <person name="McDowall J."/>
            <person name="McLaren S."/>
            <person name="McMurray A."/>
            <person name="Meidl P."/>
            <person name="Meitinger T."/>
            <person name="Milne S."/>
            <person name="Miner G."/>
            <person name="Mistry S.L."/>
            <person name="Morgan M."/>
            <person name="Morris S."/>
            <person name="Mueller I."/>
            <person name="Mullikin J.C."/>
            <person name="Nguyen N."/>
            <person name="Nordsiek G."/>
            <person name="Nyakatura G."/>
            <person name="O'dell C.N."/>
            <person name="Okwuonu G."/>
            <person name="Palmer S."/>
            <person name="Pandian R."/>
            <person name="Parker D."/>
            <person name="Parrish J."/>
            <person name="Pasternak S."/>
            <person name="Patel D."/>
            <person name="Pearce A.V."/>
            <person name="Pearson D.M."/>
            <person name="Pelan S.E."/>
            <person name="Perez L."/>
            <person name="Porter K.M."/>
            <person name="Ramsey Y."/>
            <person name="Reichwald K."/>
            <person name="Rhodes S."/>
            <person name="Ridler K.A."/>
            <person name="Schlessinger D."/>
            <person name="Schueler M.G."/>
            <person name="Sehra H.K."/>
            <person name="Shaw-Smith C."/>
            <person name="Shen H."/>
            <person name="Sheridan E.M."/>
            <person name="Shownkeen R."/>
            <person name="Skuce C.D."/>
            <person name="Smith M.L."/>
            <person name="Sotheran E.C."/>
            <person name="Steingruber H.E."/>
            <person name="Steward C.A."/>
            <person name="Storey R."/>
            <person name="Swann R.M."/>
            <person name="Swarbreck D."/>
            <person name="Tabor P.E."/>
            <person name="Taudien S."/>
            <person name="Taylor T."/>
            <person name="Teague B."/>
            <person name="Thomas K."/>
            <person name="Thorpe A."/>
            <person name="Timms K."/>
            <person name="Tracey A."/>
            <person name="Trevanion S."/>
            <person name="Tromans A.C."/>
            <person name="d'Urso M."/>
            <person name="Verduzco D."/>
            <person name="Villasana D."/>
            <person name="Waldron L."/>
            <person name="Wall M."/>
            <person name="Wang Q."/>
            <person name="Warren J."/>
            <person name="Warry G.L."/>
            <person name="Wei X."/>
            <person name="West A."/>
            <person name="Whitehead S.L."/>
            <person name="Whiteley M.N."/>
            <person name="Wilkinson J.E."/>
            <person name="Willey D.L."/>
            <person name="Williams G."/>
            <person name="Williams L."/>
            <person name="Williamson A."/>
            <person name="Williamson H."/>
            <person name="Wilming L."/>
            <person name="Woodmansey R.L."/>
            <person name="Wray P.W."/>
            <person name="Yen J."/>
            <person name="Zhang J."/>
            <person name="Zhou J."/>
            <person name="Zoghbi H."/>
            <person name="Zorilla S."/>
            <person name="Buck D."/>
            <person name="Reinhardt R."/>
            <person name="Poustka A."/>
            <person name="Rosenthal A."/>
            <person name="Lehrach H."/>
            <person name="Meindl A."/>
            <person name="Minx P.J."/>
            <person name="Hillier L.W."/>
            <person name="Willard H.F."/>
            <person name="Wilson R.K."/>
            <person name="Waterston R.H."/>
            <person name="Rice C.M."/>
            <person name="Vaudin M."/>
            <person name="Coulson A."/>
            <person name="Nelson D.L."/>
            <person name="Weinstock G."/>
            <person name="Sulston J.E."/>
            <person name="Durbin R.M."/>
            <person name="Hubbard T."/>
            <person name="Gibbs R.A."/>
            <person name="Beck S."/>
            <person name="Rogers J."/>
            <person name="Bentley D.R."/>
        </authorList>
    </citation>
    <scope>NUCLEOTIDE SEQUENCE [LARGE SCALE GENOMIC DNA]</scope>
</reference>
<accession>P58550</accession>
<accession>Q5JTT7</accession>
<gene>
    <name type="primary">FXYD6P3</name>
    <name type="synonym">FXYD8</name>
</gene>
<sequence>MEVVLIFVYSLLVPVVLASAAKEKEIDPFHYNYQTLRIGGLVFDVVLFLVPSCHLLSHRCKCSFNQKPQDPGDKEAQVENFITANAKEPQKAKN</sequence>